<sequence length="73" mass="8459">MAKDEIIEFEGEVIDTLPNTLFKVRLENGHEIIAHISGKMRKHYIRILTGDKVKVEMTPYDLSKGRITYRGKN</sequence>
<gene>
    <name evidence="1" type="primary">infA</name>
    <name type="ordered locus">Pcryo_1569</name>
</gene>
<name>IF1_PSYCK</name>
<comment type="function">
    <text evidence="1">One of the essential components for the initiation of protein synthesis. Stabilizes the binding of IF-2 and IF-3 on the 30S subunit to which N-formylmethionyl-tRNA(fMet) subsequently binds. Helps modulate mRNA selection, yielding the 30S pre-initiation complex (PIC). Upon addition of the 50S ribosomal subunit IF-1, IF-2 and IF-3 are released leaving the mature 70S translation initiation complex.</text>
</comment>
<comment type="subunit">
    <text evidence="1">Component of the 30S ribosomal translation pre-initiation complex which assembles on the 30S ribosome in the order IF-2 and IF-3, IF-1 and N-formylmethionyl-tRNA(fMet); mRNA recruitment can occur at any time during PIC assembly.</text>
</comment>
<comment type="subcellular location">
    <subcellularLocation>
        <location evidence="1">Cytoplasm</location>
    </subcellularLocation>
</comment>
<comment type="similarity">
    <text evidence="1">Belongs to the IF-1 family.</text>
</comment>
<comment type="sequence caution" evidence="2">
    <conflict type="erroneous initiation">
        <sequence resource="EMBL-CDS" id="ABE75346"/>
    </conflict>
    <text>Extended N-terminus.</text>
</comment>
<proteinExistence type="inferred from homology"/>
<reference key="1">
    <citation type="submission" date="2006-03" db="EMBL/GenBank/DDBJ databases">
        <title>Complete sequence of chromosome of Psychrobacter cryohalolentis K5.</title>
        <authorList>
            <consortium name="US DOE Joint Genome Institute"/>
            <person name="Copeland A."/>
            <person name="Lucas S."/>
            <person name="Lapidus A."/>
            <person name="Barry K."/>
            <person name="Detter J.C."/>
            <person name="Glavina T."/>
            <person name="Hammon N."/>
            <person name="Israni S."/>
            <person name="Dalin E."/>
            <person name="Tice H."/>
            <person name="Pitluck S."/>
            <person name="Brettin T."/>
            <person name="Bruce D."/>
            <person name="Han C."/>
            <person name="Tapia R."/>
            <person name="Sims D.R."/>
            <person name="Gilna P."/>
            <person name="Schmutz J."/>
            <person name="Larimer F."/>
            <person name="Land M."/>
            <person name="Hauser L."/>
            <person name="Kyrpides N."/>
            <person name="Kim E."/>
            <person name="Richardson P."/>
        </authorList>
    </citation>
    <scope>NUCLEOTIDE SEQUENCE [LARGE SCALE GENOMIC DNA]</scope>
    <source>
        <strain>ATCC BAA-1226 / DSM 17306 / VKM B-2378 / K5</strain>
    </source>
</reference>
<dbReference type="EMBL" id="CP000323">
    <property type="protein sequence ID" value="ABE75346.1"/>
    <property type="status" value="ALT_INIT"/>
    <property type="molecule type" value="Genomic_DNA"/>
</dbReference>
<dbReference type="RefSeq" id="WP_010199824.1">
    <property type="nucleotide sequence ID" value="NC_007969.1"/>
</dbReference>
<dbReference type="SMR" id="Q1QAF7"/>
<dbReference type="STRING" id="335284.Pcryo_1569"/>
<dbReference type="KEGG" id="pcr:Pcryo_1569"/>
<dbReference type="eggNOG" id="COG0361">
    <property type="taxonomic scope" value="Bacteria"/>
</dbReference>
<dbReference type="HOGENOM" id="CLU_151267_1_0_6"/>
<dbReference type="Proteomes" id="UP000002425">
    <property type="component" value="Chromosome"/>
</dbReference>
<dbReference type="GO" id="GO:0005829">
    <property type="term" value="C:cytosol"/>
    <property type="evidence" value="ECO:0007669"/>
    <property type="project" value="TreeGrafter"/>
</dbReference>
<dbReference type="GO" id="GO:0043022">
    <property type="term" value="F:ribosome binding"/>
    <property type="evidence" value="ECO:0007669"/>
    <property type="project" value="UniProtKB-UniRule"/>
</dbReference>
<dbReference type="GO" id="GO:0019843">
    <property type="term" value="F:rRNA binding"/>
    <property type="evidence" value="ECO:0007669"/>
    <property type="project" value="UniProtKB-UniRule"/>
</dbReference>
<dbReference type="GO" id="GO:0003743">
    <property type="term" value="F:translation initiation factor activity"/>
    <property type="evidence" value="ECO:0007669"/>
    <property type="project" value="UniProtKB-UniRule"/>
</dbReference>
<dbReference type="CDD" id="cd04451">
    <property type="entry name" value="S1_IF1"/>
    <property type="match status" value="1"/>
</dbReference>
<dbReference type="FunFam" id="2.40.50.140:FF:000002">
    <property type="entry name" value="Translation initiation factor IF-1"/>
    <property type="match status" value="1"/>
</dbReference>
<dbReference type="Gene3D" id="2.40.50.140">
    <property type="entry name" value="Nucleic acid-binding proteins"/>
    <property type="match status" value="1"/>
</dbReference>
<dbReference type="HAMAP" id="MF_00075">
    <property type="entry name" value="IF_1"/>
    <property type="match status" value="1"/>
</dbReference>
<dbReference type="InterPro" id="IPR012340">
    <property type="entry name" value="NA-bd_OB-fold"/>
</dbReference>
<dbReference type="InterPro" id="IPR006196">
    <property type="entry name" value="RNA-binding_domain_S1_IF1"/>
</dbReference>
<dbReference type="InterPro" id="IPR003029">
    <property type="entry name" value="S1_domain"/>
</dbReference>
<dbReference type="InterPro" id="IPR004368">
    <property type="entry name" value="TIF_IF1"/>
</dbReference>
<dbReference type="NCBIfam" id="TIGR00008">
    <property type="entry name" value="infA"/>
    <property type="match status" value="1"/>
</dbReference>
<dbReference type="PANTHER" id="PTHR33370">
    <property type="entry name" value="TRANSLATION INITIATION FACTOR IF-1, CHLOROPLASTIC"/>
    <property type="match status" value="1"/>
</dbReference>
<dbReference type="PANTHER" id="PTHR33370:SF1">
    <property type="entry name" value="TRANSLATION INITIATION FACTOR IF-1, CHLOROPLASTIC"/>
    <property type="match status" value="1"/>
</dbReference>
<dbReference type="Pfam" id="PF01176">
    <property type="entry name" value="eIF-1a"/>
    <property type="match status" value="1"/>
</dbReference>
<dbReference type="SMART" id="SM00316">
    <property type="entry name" value="S1"/>
    <property type="match status" value="1"/>
</dbReference>
<dbReference type="SUPFAM" id="SSF50249">
    <property type="entry name" value="Nucleic acid-binding proteins"/>
    <property type="match status" value="1"/>
</dbReference>
<dbReference type="PROSITE" id="PS50832">
    <property type="entry name" value="S1_IF1_TYPE"/>
    <property type="match status" value="1"/>
</dbReference>
<feature type="chain" id="PRO_0000263845" description="Translation initiation factor IF-1">
    <location>
        <begin position="1"/>
        <end position="73"/>
    </location>
</feature>
<feature type="domain" description="S1-like" evidence="1">
    <location>
        <begin position="1"/>
        <end position="72"/>
    </location>
</feature>
<keyword id="KW-0963">Cytoplasm</keyword>
<keyword id="KW-0396">Initiation factor</keyword>
<keyword id="KW-0648">Protein biosynthesis</keyword>
<keyword id="KW-0694">RNA-binding</keyword>
<keyword id="KW-0699">rRNA-binding</keyword>
<evidence type="ECO:0000255" key="1">
    <source>
        <dbReference type="HAMAP-Rule" id="MF_00075"/>
    </source>
</evidence>
<evidence type="ECO:0000305" key="2"/>
<protein>
    <recommendedName>
        <fullName evidence="1">Translation initiation factor IF-1</fullName>
    </recommendedName>
</protein>
<organism>
    <name type="scientific">Psychrobacter cryohalolentis (strain ATCC BAA-1226 / DSM 17306 / VKM B-2378 / K5)</name>
    <dbReference type="NCBI Taxonomy" id="335284"/>
    <lineage>
        <taxon>Bacteria</taxon>
        <taxon>Pseudomonadati</taxon>
        <taxon>Pseudomonadota</taxon>
        <taxon>Gammaproteobacteria</taxon>
        <taxon>Moraxellales</taxon>
        <taxon>Moraxellaceae</taxon>
        <taxon>Psychrobacter</taxon>
    </lineage>
</organism>
<accession>Q1QAF7</accession>